<keyword id="KW-0249">Electron transport</keyword>
<keyword id="KW-0472">Membrane</keyword>
<keyword id="KW-0496">Mitochondrion</keyword>
<keyword id="KW-0999">Mitochondrion inner membrane</keyword>
<keyword id="KW-0520">NAD</keyword>
<keyword id="KW-0679">Respiratory chain</keyword>
<keyword id="KW-1278">Translocase</keyword>
<keyword id="KW-0812">Transmembrane</keyword>
<keyword id="KW-1133">Transmembrane helix</keyword>
<keyword id="KW-0813">Transport</keyword>
<keyword id="KW-0830">Ubiquinone</keyword>
<organism>
    <name type="scientific">Varanus baritji</name>
    <name type="common">Black-spotted ridge-tailed monitor</name>
    <name type="synonym">Varanus insulanicus baritji</name>
    <dbReference type="NCBI Taxonomy" id="169834"/>
    <lineage>
        <taxon>Eukaryota</taxon>
        <taxon>Metazoa</taxon>
        <taxon>Chordata</taxon>
        <taxon>Craniata</taxon>
        <taxon>Vertebrata</taxon>
        <taxon>Euteleostomi</taxon>
        <taxon>Lepidosauria</taxon>
        <taxon>Squamata</taxon>
        <taxon>Bifurcata</taxon>
        <taxon>Unidentata</taxon>
        <taxon>Episquamata</taxon>
        <taxon>Toxicofera</taxon>
        <taxon>Anguimorpha</taxon>
        <taxon>Paleoanguimorpha</taxon>
        <taxon>Varanoidea</taxon>
        <taxon>Varanidae</taxon>
        <taxon>Varanus</taxon>
    </lineage>
</organism>
<sequence>MNPIINFILLFSMMAGTILAMTSHHWVYAWLGLELNTLAIIPIISKTHHPRATEASTKYFLIQAISSALFLLSGITNAYLYGTWDINHLSNNFSKILLTIALATKLGLAPVHFWLPEVLQGVPILTALIIATWQKVAPMALLIMTWNLIPTPITLTMGLLSTIIGGLGGLNQTPLRKMMAYSSIAHLGWMVIIITIAPNLTLLNLTLYMIFTSSAMLTMHLTISKTLQNAMHISHHSPIITSLFLLSLLSLGGLPPMSGFSPKWLILQELTLHHLTPLALSMALMALLSLMFYLRATYISTMTLSPSIITLKTTWRLKSVSTTSSLSMLTPPSLLILPIMPLLIQ</sequence>
<gene>
    <name type="primary">MT-ND2</name>
    <name type="synonym">MTND2</name>
    <name type="synonym">NADH2</name>
    <name type="synonym">ND2</name>
</gene>
<dbReference type="EC" id="7.1.1.2"/>
<dbReference type="EMBL" id="AF407489">
    <property type="protein sequence ID" value="AAL10023.1"/>
    <property type="molecule type" value="Genomic_DNA"/>
</dbReference>
<dbReference type="SMR" id="Q94VJ9"/>
<dbReference type="GO" id="GO:0005743">
    <property type="term" value="C:mitochondrial inner membrane"/>
    <property type="evidence" value="ECO:0007669"/>
    <property type="project" value="UniProtKB-SubCell"/>
</dbReference>
<dbReference type="GO" id="GO:0008137">
    <property type="term" value="F:NADH dehydrogenase (ubiquinone) activity"/>
    <property type="evidence" value="ECO:0007669"/>
    <property type="project" value="UniProtKB-EC"/>
</dbReference>
<dbReference type="GO" id="GO:0006120">
    <property type="term" value="P:mitochondrial electron transport, NADH to ubiquinone"/>
    <property type="evidence" value="ECO:0007669"/>
    <property type="project" value="InterPro"/>
</dbReference>
<dbReference type="InterPro" id="IPR050175">
    <property type="entry name" value="Complex_I_Subunit_2"/>
</dbReference>
<dbReference type="InterPro" id="IPR010933">
    <property type="entry name" value="NADH_DH_su2_C"/>
</dbReference>
<dbReference type="InterPro" id="IPR003917">
    <property type="entry name" value="NADH_UbQ_OxRdtase_chain2"/>
</dbReference>
<dbReference type="InterPro" id="IPR001750">
    <property type="entry name" value="ND/Mrp_TM"/>
</dbReference>
<dbReference type="PANTHER" id="PTHR46552">
    <property type="entry name" value="NADH-UBIQUINONE OXIDOREDUCTASE CHAIN 2"/>
    <property type="match status" value="1"/>
</dbReference>
<dbReference type="PANTHER" id="PTHR46552:SF1">
    <property type="entry name" value="NADH-UBIQUINONE OXIDOREDUCTASE CHAIN 2"/>
    <property type="match status" value="1"/>
</dbReference>
<dbReference type="Pfam" id="PF06444">
    <property type="entry name" value="NADH_dehy_S2_C"/>
    <property type="match status" value="1"/>
</dbReference>
<dbReference type="Pfam" id="PF00361">
    <property type="entry name" value="Proton_antipo_M"/>
    <property type="match status" value="1"/>
</dbReference>
<dbReference type="PRINTS" id="PR01436">
    <property type="entry name" value="NADHDHGNASE2"/>
</dbReference>
<reference key="1">
    <citation type="journal article" date="2001" name="Cladistics">
        <title>Mitochondrial DNA evidence and evolution in Varanoidea (Squamata).</title>
        <authorList>
            <person name="Ast J.C."/>
        </authorList>
    </citation>
    <scope>NUCLEOTIDE SEQUENCE [GENOMIC DNA]</scope>
    <source>
        <strain>Isolate UMMZ 222676</strain>
    </source>
</reference>
<accession>Q94VJ9</accession>
<protein>
    <recommendedName>
        <fullName>NADH-ubiquinone oxidoreductase chain 2</fullName>
        <ecNumber>7.1.1.2</ecNumber>
    </recommendedName>
    <alternativeName>
        <fullName>NADH dehydrogenase subunit 2</fullName>
    </alternativeName>
</protein>
<proteinExistence type="inferred from homology"/>
<evidence type="ECO:0000250" key="1"/>
<evidence type="ECO:0000255" key="2"/>
<evidence type="ECO:0000305" key="3"/>
<comment type="function">
    <text evidence="1">Core subunit of the mitochondrial membrane respiratory chain NADH dehydrogenase (Complex I) that is believed to belong to the minimal assembly required for catalysis. Complex I functions in the transfer of electrons from NADH to the respiratory chain. The immediate electron acceptor for the enzyme is believed to be ubiquinone (By similarity).</text>
</comment>
<comment type="catalytic activity">
    <reaction>
        <text>a ubiquinone + NADH + 5 H(+)(in) = a ubiquinol + NAD(+) + 4 H(+)(out)</text>
        <dbReference type="Rhea" id="RHEA:29091"/>
        <dbReference type="Rhea" id="RHEA-COMP:9565"/>
        <dbReference type="Rhea" id="RHEA-COMP:9566"/>
        <dbReference type="ChEBI" id="CHEBI:15378"/>
        <dbReference type="ChEBI" id="CHEBI:16389"/>
        <dbReference type="ChEBI" id="CHEBI:17976"/>
        <dbReference type="ChEBI" id="CHEBI:57540"/>
        <dbReference type="ChEBI" id="CHEBI:57945"/>
        <dbReference type="EC" id="7.1.1.2"/>
    </reaction>
</comment>
<comment type="subcellular location">
    <subcellularLocation>
        <location>Mitochondrion inner membrane</location>
        <topology>Multi-pass membrane protein</topology>
    </subcellularLocation>
</comment>
<comment type="similarity">
    <text evidence="3">Belongs to the complex I subunit 2 family.</text>
</comment>
<geneLocation type="mitochondrion"/>
<feature type="chain" id="PRO_0000117643" description="NADH-ubiquinone oxidoreductase chain 2">
    <location>
        <begin position="1"/>
        <end position="345"/>
    </location>
</feature>
<feature type="transmembrane region" description="Helical" evidence="2">
    <location>
        <begin position="1"/>
        <end position="21"/>
    </location>
</feature>
<feature type="transmembrane region" description="Helical" evidence="2">
    <location>
        <begin position="25"/>
        <end position="45"/>
    </location>
</feature>
<feature type="transmembrane region" description="Helical" evidence="2">
    <location>
        <begin position="60"/>
        <end position="80"/>
    </location>
</feature>
<feature type="transmembrane region" description="Helical" evidence="2">
    <location>
        <begin position="113"/>
        <end position="133"/>
    </location>
</feature>
<feature type="transmembrane region" description="Helical" evidence="2">
    <location>
        <begin position="148"/>
        <end position="168"/>
    </location>
</feature>
<feature type="transmembrane region" description="Helical" evidence="2">
    <location>
        <begin position="191"/>
        <end position="211"/>
    </location>
</feature>
<feature type="transmembrane region" description="Helical" evidence="2">
    <location>
        <begin position="239"/>
        <end position="259"/>
    </location>
</feature>
<feature type="transmembrane region" description="Helical" evidence="2">
    <location>
        <begin position="274"/>
        <end position="294"/>
    </location>
</feature>
<feature type="transmembrane region" description="Helical" evidence="2">
    <location>
        <begin position="324"/>
        <end position="344"/>
    </location>
</feature>
<name>NU2M_VARBA</name>